<accession>Q87DM6</accession>
<dbReference type="EMBL" id="AE009442">
    <property type="protein sequence ID" value="AAO28527.1"/>
    <property type="molecule type" value="Genomic_DNA"/>
</dbReference>
<dbReference type="SMR" id="Q87DM6"/>
<dbReference type="KEGG" id="xft:PD_0656"/>
<dbReference type="HOGENOM" id="CLU_033732_1_0_6"/>
<dbReference type="Proteomes" id="UP000002516">
    <property type="component" value="Chromosome"/>
</dbReference>
<dbReference type="GO" id="GO:0005829">
    <property type="term" value="C:cytosol"/>
    <property type="evidence" value="ECO:0007669"/>
    <property type="project" value="TreeGrafter"/>
</dbReference>
<dbReference type="GO" id="GO:0005525">
    <property type="term" value="F:GTP binding"/>
    <property type="evidence" value="ECO:0007669"/>
    <property type="project" value="UniProtKB-UniRule"/>
</dbReference>
<dbReference type="GO" id="GO:0046872">
    <property type="term" value="F:metal ion binding"/>
    <property type="evidence" value="ECO:0007669"/>
    <property type="project" value="UniProtKB-KW"/>
</dbReference>
<dbReference type="GO" id="GO:0000917">
    <property type="term" value="P:division septum assembly"/>
    <property type="evidence" value="ECO:0007669"/>
    <property type="project" value="UniProtKB-KW"/>
</dbReference>
<dbReference type="CDD" id="cd01876">
    <property type="entry name" value="YihA_EngB"/>
    <property type="match status" value="1"/>
</dbReference>
<dbReference type="FunFam" id="3.40.50.300:FF:000098">
    <property type="entry name" value="Probable GTP-binding protein EngB"/>
    <property type="match status" value="1"/>
</dbReference>
<dbReference type="Gene3D" id="3.40.50.300">
    <property type="entry name" value="P-loop containing nucleotide triphosphate hydrolases"/>
    <property type="match status" value="1"/>
</dbReference>
<dbReference type="HAMAP" id="MF_00321">
    <property type="entry name" value="GTPase_EngB"/>
    <property type="match status" value="1"/>
</dbReference>
<dbReference type="InterPro" id="IPR030393">
    <property type="entry name" value="G_ENGB_dom"/>
</dbReference>
<dbReference type="InterPro" id="IPR006073">
    <property type="entry name" value="GTP-bd"/>
</dbReference>
<dbReference type="InterPro" id="IPR019987">
    <property type="entry name" value="GTP-bd_ribosome_bio_YsxC"/>
</dbReference>
<dbReference type="InterPro" id="IPR027417">
    <property type="entry name" value="P-loop_NTPase"/>
</dbReference>
<dbReference type="NCBIfam" id="TIGR03598">
    <property type="entry name" value="GTPase_YsxC"/>
    <property type="match status" value="1"/>
</dbReference>
<dbReference type="PANTHER" id="PTHR11649:SF13">
    <property type="entry name" value="ENGB-TYPE G DOMAIN-CONTAINING PROTEIN"/>
    <property type="match status" value="1"/>
</dbReference>
<dbReference type="PANTHER" id="PTHR11649">
    <property type="entry name" value="MSS1/TRME-RELATED GTP-BINDING PROTEIN"/>
    <property type="match status" value="1"/>
</dbReference>
<dbReference type="Pfam" id="PF01926">
    <property type="entry name" value="MMR_HSR1"/>
    <property type="match status" value="1"/>
</dbReference>
<dbReference type="SUPFAM" id="SSF52540">
    <property type="entry name" value="P-loop containing nucleoside triphosphate hydrolases"/>
    <property type="match status" value="1"/>
</dbReference>
<dbReference type="PROSITE" id="PS51706">
    <property type="entry name" value="G_ENGB"/>
    <property type="match status" value="1"/>
</dbReference>
<protein>
    <recommendedName>
        <fullName evidence="1">Probable GTP-binding protein EngB</fullName>
    </recommendedName>
</protein>
<sequence length="203" mass="22863">MSSPLECAKYLLSAHTPHQLPSDDGSEVAFAGRSNAGKSSVLNTLTRQNALARVSKTPGRTQQLVYFTVTPQRYLVDLPGYGYAKVPKELQIHWQAFIDTYFHHRQSLRGLVVVMDIRHPLKEYDLQMLAYARQRGLPAQALLTKADKLGRGQQAQTLQKVRNELTKHFADHINIQTFSSKSRQGVEQLHTVIETWLGLARSG</sequence>
<feature type="chain" id="PRO_0000157805" description="Probable GTP-binding protein EngB">
    <location>
        <begin position="1"/>
        <end position="203"/>
    </location>
</feature>
<feature type="domain" description="EngB-type G" evidence="1">
    <location>
        <begin position="24"/>
        <end position="199"/>
    </location>
</feature>
<feature type="binding site" evidence="1">
    <location>
        <begin position="32"/>
        <end position="39"/>
    </location>
    <ligand>
        <name>GTP</name>
        <dbReference type="ChEBI" id="CHEBI:37565"/>
    </ligand>
</feature>
<feature type="binding site" evidence="1">
    <location>
        <position position="39"/>
    </location>
    <ligand>
        <name>Mg(2+)</name>
        <dbReference type="ChEBI" id="CHEBI:18420"/>
    </ligand>
</feature>
<feature type="binding site" evidence="1">
    <location>
        <begin position="59"/>
        <end position="63"/>
    </location>
    <ligand>
        <name>GTP</name>
        <dbReference type="ChEBI" id="CHEBI:37565"/>
    </ligand>
</feature>
<feature type="binding site" evidence="1">
    <location>
        <position position="61"/>
    </location>
    <ligand>
        <name>Mg(2+)</name>
        <dbReference type="ChEBI" id="CHEBI:18420"/>
    </ligand>
</feature>
<feature type="binding site" evidence="1">
    <location>
        <begin position="77"/>
        <end position="80"/>
    </location>
    <ligand>
        <name>GTP</name>
        <dbReference type="ChEBI" id="CHEBI:37565"/>
    </ligand>
</feature>
<feature type="binding site" evidence="1">
    <location>
        <begin position="144"/>
        <end position="147"/>
    </location>
    <ligand>
        <name>GTP</name>
        <dbReference type="ChEBI" id="CHEBI:37565"/>
    </ligand>
</feature>
<feature type="binding site" evidence="1">
    <location>
        <begin position="178"/>
        <end position="180"/>
    </location>
    <ligand>
        <name>GTP</name>
        <dbReference type="ChEBI" id="CHEBI:37565"/>
    </ligand>
</feature>
<proteinExistence type="inferred from homology"/>
<organism>
    <name type="scientific">Xylella fastidiosa (strain Temecula1 / ATCC 700964)</name>
    <dbReference type="NCBI Taxonomy" id="183190"/>
    <lineage>
        <taxon>Bacteria</taxon>
        <taxon>Pseudomonadati</taxon>
        <taxon>Pseudomonadota</taxon>
        <taxon>Gammaproteobacteria</taxon>
        <taxon>Lysobacterales</taxon>
        <taxon>Lysobacteraceae</taxon>
        <taxon>Xylella</taxon>
    </lineage>
</organism>
<gene>
    <name evidence="1" type="primary">engB</name>
    <name type="ordered locus">PD_0656</name>
</gene>
<keyword id="KW-0131">Cell cycle</keyword>
<keyword id="KW-0132">Cell division</keyword>
<keyword id="KW-0342">GTP-binding</keyword>
<keyword id="KW-0460">Magnesium</keyword>
<keyword id="KW-0479">Metal-binding</keyword>
<keyword id="KW-0547">Nucleotide-binding</keyword>
<keyword id="KW-1185">Reference proteome</keyword>
<keyword id="KW-0717">Septation</keyword>
<comment type="function">
    <text evidence="1">Necessary for normal cell division and for the maintenance of normal septation.</text>
</comment>
<comment type="cofactor">
    <cofactor evidence="1">
        <name>Mg(2+)</name>
        <dbReference type="ChEBI" id="CHEBI:18420"/>
    </cofactor>
</comment>
<comment type="similarity">
    <text evidence="1">Belongs to the TRAFAC class TrmE-Era-EngA-EngB-Septin-like GTPase superfamily. EngB GTPase family.</text>
</comment>
<name>ENGB_XYLFT</name>
<reference key="1">
    <citation type="journal article" date="2003" name="J. Bacteriol.">
        <title>Comparative analyses of the complete genome sequences of Pierce's disease and citrus variegated chlorosis strains of Xylella fastidiosa.</title>
        <authorList>
            <person name="Van Sluys M.A."/>
            <person name="de Oliveira M.C."/>
            <person name="Monteiro-Vitorello C.B."/>
            <person name="Miyaki C.Y."/>
            <person name="Furlan L.R."/>
            <person name="Camargo L.E.A."/>
            <person name="da Silva A.C.R."/>
            <person name="Moon D.H."/>
            <person name="Takita M.A."/>
            <person name="Lemos E.G.M."/>
            <person name="Machado M.A."/>
            <person name="Ferro M.I.T."/>
            <person name="da Silva F.R."/>
            <person name="Goldman M.H.S."/>
            <person name="Goldman G.H."/>
            <person name="Lemos M.V.F."/>
            <person name="El-Dorry H."/>
            <person name="Tsai S.M."/>
            <person name="Carrer H."/>
            <person name="Carraro D.M."/>
            <person name="de Oliveira R.C."/>
            <person name="Nunes L.R."/>
            <person name="Siqueira W.J."/>
            <person name="Coutinho L.L."/>
            <person name="Kimura E.T."/>
            <person name="Ferro E.S."/>
            <person name="Harakava R."/>
            <person name="Kuramae E.E."/>
            <person name="Marino C.L."/>
            <person name="Giglioti E."/>
            <person name="Abreu I.L."/>
            <person name="Alves L.M.C."/>
            <person name="do Amaral A.M."/>
            <person name="Baia G.S."/>
            <person name="Blanco S.R."/>
            <person name="Brito M.S."/>
            <person name="Cannavan F.S."/>
            <person name="Celestino A.V."/>
            <person name="da Cunha A.F."/>
            <person name="Fenille R.C."/>
            <person name="Ferro J.A."/>
            <person name="Formighieri E.F."/>
            <person name="Kishi L.T."/>
            <person name="Leoni S.G."/>
            <person name="Oliveira A.R."/>
            <person name="Rosa V.E. Jr."/>
            <person name="Sassaki F.T."/>
            <person name="Sena J.A.D."/>
            <person name="de Souza A.A."/>
            <person name="Truffi D."/>
            <person name="Tsukumo F."/>
            <person name="Yanai G.M."/>
            <person name="Zaros L.G."/>
            <person name="Civerolo E.L."/>
            <person name="Simpson A.J.G."/>
            <person name="Almeida N.F. Jr."/>
            <person name="Setubal J.C."/>
            <person name="Kitajima J.P."/>
        </authorList>
    </citation>
    <scope>NUCLEOTIDE SEQUENCE [LARGE SCALE GENOMIC DNA]</scope>
    <source>
        <strain>Temecula1 / ATCC 700964</strain>
    </source>
</reference>
<evidence type="ECO:0000255" key="1">
    <source>
        <dbReference type="HAMAP-Rule" id="MF_00321"/>
    </source>
</evidence>